<protein>
    <recommendedName>
        <fullName evidence="1">Low affinity potassium transport system protein Kup</fullName>
    </recommendedName>
    <alternativeName>
        <fullName evidence="1">Kup system potassium uptake protein</fullName>
    </alternativeName>
</protein>
<dbReference type="EMBL" id="FM180568">
    <property type="protein sequence ID" value="CAS11605.1"/>
    <property type="molecule type" value="Genomic_DNA"/>
</dbReference>
<dbReference type="RefSeq" id="WP_000102319.1">
    <property type="nucleotide sequence ID" value="NC_011601.1"/>
</dbReference>
<dbReference type="GeneID" id="75205465"/>
<dbReference type="KEGG" id="ecg:E2348C_4057"/>
<dbReference type="HOGENOM" id="CLU_008142_4_2_6"/>
<dbReference type="Proteomes" id="UP000008205">
    <property type="component" value="Chromosome"/>
</dbReference>
<dbReference type="GO" id="GO:0005886">
    <property type="term" value="C:plasma membrane"/>
    <property type="evidence" value="ECO:0007669"/>
    <property type="project" value="UniProtKB-SubCell"/>
</dbReference>
<dbReference type="GO" id="GO:0015079">
    <property type="term" value="F:potassium ion transmembrane transporter activity"/>
    <property type="evidence" value="ECO:0007669"/>
    <property type="project" value="UniProtKB-UniRule"/>
</dbReference>
<dbReference type="GO" id="GO:0015293">
    <property type="term" value="F:symporter activity"/>
    <property type="evidence" value="ECO:0007669"/>
    <property type="project" value="UniProtKB-UniRule"/>
</dbReference>
<dbReference type="HAMAP" id="MF_01522">
    <property type="entry name" value="Kup"/>
    <property type="match status" value="1"/>
</dbReference>
<dbReference type="InterPro" id="IPR003855">
    <property type="entry name" value="K+_transporter"/>
</dbReference>
<dbReference type="InterPro" id="IPR053952">
    <property type="entry name" value="K_trans_C"/>
</dbReference>
<dbReference type="InterPro" id="IPR053951">
    <property type="entry name" value="K_trans_N"/>
</dbReference>
<dbReference type="InterPro" id="IPR023051">
    <property type="entry name" value="Kup"/>
</dbReference>
<dbReference type="NCBIfam" id="TIGR00794">
    <property type="entry name" value="kup"/>
    <property type="match status" value="1"/>
</dbReference>
<dbReference type="NCBIfam" id="NF008015">
    <property type="entry name" value="PRK10745.1"/>
    <property type="match status" value="1"/>
</dbReference>
<dbReference type="PANTHER" id="PTHR30540:SF79">
    <property type="entry name" value="LOW AFFINITY POTASSIUM TRANSPORT SYSTEM PROTEIN KUP"/>
    <property type="match status" value="1"/>
</dbReference>
<dbReference type="PANTHER" id="PTHR30540">
    <property type="entry name" value="OSMOTIC STRESS POTASSIUM TRANSPORTER"/>
    <property type="match status" value="1"/>
</dbReference>
<dbReference type="Pfam" id="PF02705">
    <property type="entry name" value="K_trans"/>
    <property type="match status" value="1"/>
</dbReference>
<dbReference type="Pfam" id="PF22776">
    <property type="entry name" value="K_trans_C"/>
    <property type="match status" value="1"/>
</dbReference>
<proteinExistence type="inferred from homology"/>
<name>KUP_ECO27</name>
<gene>
    <name evidence="1" type="primary">kup</name>
    <name type="ordered locus">E2348C_4057</name>
</gene>
<reference key="1">
    <citation type="journal article" date="2009" name="J. Bacteriol.">
        <title>Complete genome sequence and comparative genome analysis of enteropathogenic Escherichia coli O127:H6 strain E2348/69.</title>
        <authorList>
            <person name="Iguchi A."/>
            <person name="Thomson N.R."/>
            <person name="Ogura Y."/>
            <person name="Saunders D."/>
            <person name="Ooka T."/>
            <person name="Henderson I.R."/>
            <person name="Harris D."/>
            <person name="Asadulghani M."/>
            <person name="Kurokawa K."/>
            <person name="Dean P."/>
            <person name="Kenny B."/>
            <person name="Quail M.A."/>
            <person name="Thurston S."/>
            <person name="Dougan G."/>
            <person name="Hayashi T."/>
            <person name="Parkhill J."/>
            <person name="Frankel G."/>
        </authorList>
    </citation>
    <scope>NUCLEOTIDE SEQUENCE [LARGE SCALE GENOMIC DNA]</scope>
    <source>
        <strain>E2348/69 / EPEC</strain>
    </source>
</reference>
<keyword id="KW-0997">Cell inner membrane</keyword>
<keyword id="KW-1003">Cell membrane</keyword>
<keyword id="KW-0406">Ion transport</keyword>
<keyword id="KW-0472">Membrane</keyword>
<keyword id="KW-0630">Potassium</keyword>
<keyword id="KW-0633">Potassium transport</keyword>
<keyword id="KW-1185">Reference proteome</keyword>
<keyword id="KW-0769">Symport</keyword>
<keyword id="KW-0812">Transmembrane</keyword>
<keyword id="KW-1133">Transmembrane helix</keyword>
<keyword id="KW-0813">Transport</keyword>
<evidence type="ECO:0000255" key="1">
    <source>
        <dbReference type="HAMAP-Rule" id="MF_01522"/>
    </source>
</evidence>
<organism>
    <name type="scientific">Escherichia coli O127:H6 (strain E2348/69 / EPEC)</name>
    <dbReference type="NCBI Taxonomy" id="574521"/>
    <lineage>
        <taxon>Bacteria</taxon>
        <taxon>Pseudomonadati</taxon>
        <taxon>Pseudomonadota</taxon>
        <taxon>Gammaproteobacteria</taxon>
        <taxon>Enterobacterales</taxon>
        <taxon>Enterobacteriaceae</taxon>
        <taxon>Escherichia</taxon>
    </lineage>
</organism>
<comment type="function">
    <text evidence="1">Responsible for the low-affinity transport of potassium into the cell. Likely operates as a K(+):H(+) symporter.</text>
</comment>
<comment type="catalytic activity">
    <reaction evidence="1">
        <text>K(+)(in) + H(+)(in) = K(+)(out) + H(+)(out)</text>
        <dbReference type="Rhea" id="RHEA:28490"/>
        <dbReference type="ChEBI" id="CHEBI:15378"/>
        <dbReference type="ChEBI" id="CHEBI:29103"/>
    </reaction>
    <physiologicalReaction direction="right-to-left" evidence="1">
        <dbReference type="Rhea" id="RHEA:28492"/>
    </physiologicalReaction>
</comment>
<comment type="subcellular location">
    <subcellularLocation>
        <location evidence="1">Cell inner membrane</location>
        <topology evidence="1">Multi-pass membrane protein</topology>
    </subcellularLocation>
</comment>
<comment type="similarity">
    <text evidence="1">Belongs to the HAK/KUP transporter (TC 2.A.72) family.</text>
</comment>
<sequence length="622" mass="69294">MSTDNKQSLPAITLAAIGVVYGDIGTSPLYTLRECLSGQFGFGVERDAVFGFLSLIFWLLIFVVSIKYLTFVMRADNAGEGGILTLMSLAGRNTSARTTSMLVIMGLIGGSFFYGEVVITPAISVMSAIEGLEIVAPQLDTWIVPLSIIVLTLLFMIQKHGTAMVGKLFAPIMLTWFLILAGLGLRSIIANPEVLHALNPMWAVHFFLEYKTVSFIALGAVVLSITGVEALYADMGHFGKFPIRLAWFTVVLPSLTLNYFGQGALLLKNPEAIKNPFFLLAPDWALIPLLIIAALATVIASQAVISGVFSLTRQAVRLGYLSPMRIIHTSEMESGQIYIPFVNWMLYVAVVIVIVSFEHSSNLAAAYGIAVTGTMVLTSILSTTVARQNWHWNKYFVALILIAFLCVDIPLFTANLDKLLSGGWLPLSLGTVMFIVMTTWKSERFRLLRRMHEHGNSLEAMIASLEKSPPVRVPGTAVYMSRAINVIPFALMHNLKHNKVLHERVILLTLRTEDAPYVHNVRRVQIEQLSPTFWRVVASYGWRETPNVEEVFHRCGLEGLSCRMMETSFFMSHESLILGKRPWYLRLRGKLYLLLQRNALRAPDQFEIPPNRVIELGTQVEI</sequence>
<feature type="chain" id="PRO_1000185116" description="Low affinity potassium transport system protein Kup">
    <location>
        <begin position="1"/>
        <end position="622"/>
    </location>
</feature>
<feature type="transmembrane region" description="Helical" evidence="1">
    <location>
        <begin position="9"/>
        <end position="29"/>
    </location>
</feature>
<feature type="transmembrane region" description="Helical" evidence="1">
    <location>
        <begin position="49"/>
        <end position="69"/>
    </location>
</feature>
<feature type="transmembrane region" description="Helical" evidence="1">
    <location>
        <begin position="103"/>
        <end position="123"/>
    </location>
</feature>
<feature type="transmembrane region" description="Helical" evidence="1">
    <location>
        <begin position="137"/>
        <end position="157"/>
    </location>
</feature>
<feature type="transmembrane region" description="Helical" evidence="1">
    <location>
        <begin position="165"/>
        <end position="185"/>
    </location>
</feature>
<feature type="transmembrane region" description="Helical" evidence="1">
    <location>
        <begin position="213"/>
        <end position="233"/>
    </location>
</feature>
<feature type="transmembrane region" description="Helical" evidence="1">
    <location>
        <begin position="247"/>
        <end position="267"/>
    </location>
</feature>
<feature type="transmembrane region" description="Helical" evidence="1">
    <location>
        <begin position="276"/>
        <end position="296"/>
    </location>
</feature>
<feature type="transmembrane region" description="Helical" evidence="1">
    <location>
        <begin position="337"/>
        <end position="357"/>
    </location>
</feature>
<feature type="transmembrane region" description="Helical" evidence="1">
    <location>
        <begin position="363"/>
        <end position="383"/>
    </location>
</feature>
<feature type="transmembrane region" description="Helical" evidence="1">
    <location>
        <begin position="396"/>
        <end position="416"/>
    </location>
</feature>
<feature type="transmembrane region" description="Helical" evidence="1">
    <location>
        <begin position="419"/>
        <end position="439"/>
    </location>
</feature>
<accession>B7UML2</accession>